<keyword id="KW-0150">Chloroplast</keyword>
<keyword id="KW-0249">Electron transport</keyword>
<keyword id="KW-0472">Membrane</keyword>
<keyword id="KW-0602">Photosynthesis</keyword>
<keyword id="KW-0934">Plastid</keyword>
<keyword id="KW-0691">RNA editing</keyword>
<keyword id="KW-0793">Thylakoid</keyword>
<keyword id="KW-0812">Transmembrane</keyword>
<keyword id="KW-1133">Transmembrane helix</keyword>
<keyword id="KW-0813">Transport</keyword>
<proteinExistence type="evidence at transcript level"/>
<reference key="1">
    <citation type="journal article" date="2003" name="DNA Res.">
        <title>Complete nucleotide sequence of the chloroplast genome from a leptosporangiate fern, Adiantum capillus-veneris L.</title>
        <authorList>
            <person name="Wolf P.G."/>
            <person name="Rowe C.A."/>
            <person name="Sinclair R.B."/>
            <person name="Hasebe M."/>
        </authorList>
    </citation>
    <scope>NUCLEOTIDE SEQUENCE [LARGE SCALE GENOMIC DNA]</scope>
</reference>
<reference key="2">
    <citation type="journal article" date="2004" name="Gene">
        <title>High levels of RNA editing in a vascular plant chloroplast genome: analysis of transcripts from the fern Adiantum capillus-veneris.</title>
        <authorList>
            <person name="Wolf P.G."/>
            <person name="Rowe C.A."/>
            <person name="Hasebe M."/>
        </authorList>
    </citation>
    <scope>NUCLEOTIDE SEQUENCE [GENOMIC DNA]</scope>
    <scope>RNA EDITING</scope>
    <source>
        <tissue>Frond</tissue>
    </source>
</reference>
<sequence>MVEALLSGIVLGLIPITLAGLFVTAYLQYRRGDQLDIR</sequence>
<protein>
    <recommendedName>
        <fullName evidence="1">Cytochrome b6-f complex subunit 5</fullName>
    </recommendedName>
    <alternativeName>
        <fullName evidence="1">Cytochrome b6-f complex subunit PetG</fullName>
    </alternativeName>
    <alternativeName>
        <fullName evidence="1">Cytochrome b6-f complex subunit V</fullName>
    </alternativeName>
</protein>
<geneLocation type="chloroplast"/>
<accession>Q85FK3</accession>
<evidence type="ECO:0000255" key="1">
    <source>
        <dbReference type="HAMAP-Rule" id="MF_00432"/>
    </source>
</evidence>
<evidence type="ECO:0000269" key="2">
    <source>
    </source>
</evidence>
<name>PETG_ADICA</name>
<organism>
    <name type="scientific">Adiantum capillus-veneris</name>
    <name type="common">Maidenhair fern</name>
    <dbReference type="NCBI Taxonomy" id="13818"/>
    <lineage>
        <taxon>Eukaryota</taxon>
        <taxon>Viridiplantae</taxon>
        <taxon>Streptophyta</taxon>
        <taxon>Embryophyta</taxon>
        <taxon>Tracheophyta</taxon>
        <taxon>Polypodiopsida</taxon>
        <taxon>Polypodiidae</taxon>
        <taxon>Polypodiales</taxon>
        <taxon>Pteridineae</taxon>
        <taxon>Pteridaceae</taxon>
        <taxon>Vittarioideae</taxon>
        <taxon>Adiantum</taxon>
    </lineage>
</organism>
<dbReference type="EMBL" id="AY178864">
    <property type="protein sequence ID" value="AAP29410.2"/>
    <property type="molecule type" value="Genomic_DNA"/>
</dbReference>
<dbReference type="RefSeq" id="NP_848079.1">
    <property type="nucleotide sequence ID" value="NC_004766.1"/>
</dbReference>
<dbReference type="SMR" id="Q85FK3"/>
<dbReference type="GeneID" id="807439"/>
<dbReference type="GO" id="GO:0009535">
    <property type="term" value="C:chloroplast thylakoid membrane"/>
    <property type="evidence" value="ECO:0007669"/>
    <property type="project" value="UniProtKB-SubCell"/>
</dbReference>
<dbReference type="GO" id="GO:0009512">
    <property type="term" value="C:cytochrome b6f complex"/>
    <property type="evidence" value="ECO:0007669"/>
    <property type="project" value="InterPro"/>
</dbReference>
<dbReference type="GO" id="GO:0045158">
    <property type="term" value="F:electron transporter, transferring electrons within cytochrome b6/f complex of photosystem II activity"/>
    <property type="evidence" value="ECO:0007669"/>
    <property type="project" value="UniProtKB-UniRule"/>
</dbReference>
<dbReference type="GO" id="GO:0017004">
    <property type="term" value="P:cytochrome complex assembly"/>
    <property type="evidence" value="ECO:0007669"/>
    <property type="project" value="UniProtKB-UniRule"/>
</dbReference>
<dbReference type="GO" id="GO:0015979">
    <property type="term" value="P:photosynthesis"/>
    <property type="evidence" value="ECO:0007669"/>
    <property type="project" value="UniProtKB-KW"/>
</dbReference>
<dbReference type="HAMAP" id="MF_00432">
    <property type="entry name" value="Cytb6_f_PetG"/>
    <property type="match status" value="1"/>
</dbReference>
<dbReference type="InterPro" id="IPR003683">
    <property type="entry name" value="Cyt_6/f_cplx_su5"/>
</dbReference>
<dbReference type="InterPro" id="IPR036099">
    <property type="entry name" value="Cyt_6/f_cplx_su5_sf"/>
</dbReference>
<dbReference type="NCBIfam" id="NF001907">
    <property type="entry name" value="PRK00665.1"/>
    <property type="match status" value="1"/>
</dbReference>
<dbReference type="Pfam" id="PF02529">
    <property type="entry name" value="PetG"/>
    <property type="match status" value="1"/>
</dbReference>
<dbReference type="PIRSF" id="PIRSF000034">
    <property type="entry name" value="Cyt_b6-f_V"/>
    <property type="match status" value="1"/>
</dbReference>
<dbReference type="SUPFAM" id="SSF103446">
    <property type="entry name" value="PetG subunit of the cytochrome b6f complex"/>
    <property type="match status" value="1"/>
</dbReference>
<feature type="chain" id="PRO_0000216365" description="Cytochrome b6-f complex subunit 5">
    <location>
        <begin position="1"/>
        <end position="38"/>
    </location>
</feature>
<feature type="transmembrane region" description="Helical" evidence="1">
    <location>
        <begin position="5"/>
        <end position="25"/>
    </location>
</feature>
<comment type="function">
    <text evidence="1">Component of the cytochrome b6-f complex, which mediates electron transfer between photosystem II (PSII) and photosystem I (PSI), cyclic electron flow around PSI, and state transitions. PetG is required for either the stability or assembly of the cytochrome b6-f complex.</text>
</comment>
<comment type="subunit">
    <text evidence="1">The 4 large subunits of the cytochrome b6-f complex are cytochrome b6, subunit IV (17 kDa polypeptide, PetD), cytochrome f and the Rieske protein, while the 4 small subunits are PetG, PetL, PetM and PetN. The complex functions as a dimer.</text>
</comment>
<comment type="subcellular location">
    <subcellularLocation>
        <location evidence="1">Plastid</location>
        <location evidence="1">Chloroplast thylakoid membrane</location>
        <topology evidence="1">Single-pass membrane protein</topology>
    </subcellularLocation>
</comment>
<comment type="RNA editing">
    <location>
        <position position="13" evidence="2"/>
    </location>
</comment>
<comment type="similarity">
    <text evidence="1">Belongs to the PetG family.</text>
</comment>
<gene>
    <name evidence="1" type="primary">petG</name>
</gene>